<reference key="1">
    <citation type="journal article" date="2010" name="J. Bacteriol.">
        <title>The genetic basis of laboratory adaptation in Caulobacter crescentus.</title>
        <authorList>
            <person name="Marks M.E."/>
            <person name="Castro-Rojas C.M."/>
            <person name="Teiling C."/>
            <person name="Du L."/>
            <person name="Kapatral V."/>
            <person name="Walunas T.L."/>
            <person name="Crosson S."/>
        </authorList>
    </citation>
    <scope>NUCLEOTIDE SEQUENCE [LARGE SCALE GENOMIC DNA]</scope>
    <source>
        <strain>NA1000 / CB15N</strain>
    </source>
</reference>
<organism>
    <name type="scientific">Caulobacter vibrioides (strain NA1000 / CB15N)</name>
    <name type="common">Caulobacter crescentus</name>
    <dbReference type="NCBI Taxonomy" id="565050"/>
    <lineage>
        <taxon>Bacteria</taxon>
        <taxon>Pseudomonadati</taxon>
        <taxon>Pseudomonadota</taxon>
        <taxon>Alphaproteobacteria</taxon>
        <taxon>Caulobacterales</taxon>
        <taxon>Caulobacteraceae</taxon>
        <taxon>Caulobacter</taxon>
    </lineage>
</organism>
<accession>B8H331</accession>
<sequence>MTETDQTPDTAPEAAPEVAPIVSDDLAPLRAKTIVLVGLMGVGKSSVGRRLANVLGLPFRDADNEVEAAAGRSISEIFAELGEPAFRDGERRVIARLLDEPPHVLATGGGAFVNAETRALINEKAVSVWLKADVELLARRVSRKDNRPLVRGKDPVKVLTELAEARYPAYAEAQVHVETGDTPHMVAVEAILTALRQAHA</sequence>
<gene>
    <name evidence="1" type="primary">aroK</name>
    <name type="ordered locus">CCNA_03103</name>
</gene>
<evidence type="ECO:0000255" key="1">
    <source>
        <dbReference type="HAMAP-Rule" id="MF_00109"/>
    </source>
</evidence>
<proteinExistence type="inferred from homology"/>
<keyword id="KW-0028">Amino-acid biosynthesis</keyword>
<keyword id="KW-0057">Aromatic amino acid biosynthesis</keyword>
<keyword id="KW-0067">ATP-binding</keyword>
<keyword id="KW-0963">Cytoplasm</keyword>
<keyword id="KW-0418">Kinase</keyword>
<keyword id="KW-0460">Magnesium</keyword>
<keyword id="KW-0479">Metal-binding</keyword>
<keyword id="KW-0547">Nucleotide-binding</keyword>
<keyword id="KW-1185">Reference proteome</keyword>
<keyword id="KW-0808">Transferase</keyword>
<protein>
    <recommendedName>
        <fullName evidence="1">Shikimate kinase</fullName>
        <shortName evidence="1">SK</shortName>
        <ecNumber evidence="1">2.7.1.71</ecNumber>
    </recommendedName>
</protein>
<name>AROK_CAUVN</name>
<dbReference type="EC" id="2.7.1.71" evidence="1"/>
<dbReference type="EMBL" id="CP001340">
    <property type="protein sequence ID" value="ACL96568.1"/>
    <property type="molecule type" value="Genomic_DNA"/>
</dbReference>
<dbReference type="RefSeq" id="WP_010920844.1">
    <property type="nucleotide sequence ID" value="NC_011916.1"/>
</dbReference>
<dbReference type="RefSeq" id="YP_002518476.1">
    <property type="nucleotide sequence ID" value="NC_011916.1"/>
</dbReference>
<dbReference type="SMR" id="B8H331"/>
<dbReference type="GeneID" id="7333557"/>
<dbReference type="KEGG" id="ccs:CCNA_03103"/>
<dbReference type="PATRIC" id="fig|565050.3.peg.3031"/>
<dbReference type="HOGENOM" id="CLU_057607_2_0_5"/>
<dbReference type="OrthoDB" id="9800332at2"/>
<dbReference type="PhylomeDB" id="B8H331"/>
<dbReference type="UniPathway" id="UPA00053">
    <property type="reaction ID" value="UER00088"/>
</dbReference>
<dbReference type="Proteomes" id="UP000001364">
    <property type="component" value="Chromosome"/>
</dbReference>
<dbReference type="GO" id="GO:0005829">
    <property type="term" value="C:cytosol"/>
    <property type="evidence" value="ECO:0007669"/>
    <property type="project" value="TreeGrafter"/>
</dbReference>
<dbReference type="GO" id="GO:0005524">
    <property type="term" value="F:ATP binding"/>
    <property type="evidence" value="ECO:0007669"/>
    <property type="project" value="UniProtKB-UniRule"/>
</dbReference>
<dbReference type="GO" id="GO:0000287">
    <property type="term" value="F:magnesium ion binding"/>
    <property type="evidence" value="ECO:0007669"/>
    <property type="project" value="UniProtKB-UniRule"/>
</dbReference>
<dbReference type="GO" id="GO:0004765">
    <property type="term" value="F:shikimate kinase activity"/>
    <property type="evidence" value="ECO:0007669"/>
    <property type="project" value="UniProtKB-UniRule"/>
</dbReference>
<dbReference type="GO" id="GO:0008652">
    <property type="term" value="P:amino acid biosynthetic process"/>
    <property type="evidence" value="ECO:0007669"/>
    <property type="project" value="UniProtKB-KW"/>
</dbReference>
<dbReference type="GO" id="GO:0009073">
    <property type="term" value="P:aromatic amino acid family biosynthetic process"/>
    <property type="evidence" value="ECO:0007669"/>
    <property type="project" value="UniProtKB-KW"/>
</dbReference>
<dbReference type="GO" id="GO:0009423">
    <property type="term" value="P:chorismate biosynthetic process"/>
    <property type="evidence" value="ECO:0007669"/>
    <property type="project" value="UniProtKB-UniRule"/>
</dbReference>
<dbReference type="CDD" id="cd00464">
    <property type="entry name" value="SK"/>
    <property type="match status" value="1"/>
</dbReference>
<dbReference type="Gene3D" id="3.40.50.300">
    <property type="entry name" value="P-loop containing nucleotide triphosphate hydrolases"/>
    <property type="match status" value="1"/>
</dbReference>
<dbReference type="HAMAP" id="MF_00109">
    <property type="entry name" value="Shikimate_kinase"/>
    <property type="match status" value="1"/>
</dbReference>
<dbReference type="InterPro" id="IPR027417">
    <property type="entry name" value="P-loop_NTPase"/>
</dbReference>
<dbReference type="InterPro" id="IPR031322">
    <property type="entry name" value="Shikimate/glucono_kinase"/>
</dbReference>
<dbReference type="InterPro" id="IPR000623">
    <property type="entry name" value="Shikimate_kinase/TSH1"/>
</dbReference>
<dbReference type="InterPro" id="IPR023000">
    <property type="entry name" value="Shikimate_kinase_CS"/>
</dbReference>
<dbReference type="NCBIfam" id="NF010552">
    <property type="entry name" value="PRK13946.1"/>
    <property type="match status" value="1"/>
</dbReference>
<dbReference type="PANTHER" id="PTHR21087">
    <property type="entry name" value="SHIKIMATE KINASE"/>
    <property type="match status" value="1"/>
</dbReference>
<dbReference type="PANTHER" id="PTHR21087:SF16">
    <property type="entry name" value="SHIKIMATE KINASE 1, CHLOROPLASTIC"/>
    <property type="match status" value="1"/>
</dbReference>
<dbReference type="Pfam" id="PF01202">
    <property type="entry name" value="SKI"/>
    <property type="match status" value="1"/>
</dbReference>
<dbReference type="PRINTS" id="PR01100">
    <property type="entry name" value="SHIKIMTKNASE"/>
</dbReference>
<dbReference type="SUPFAM" id="SSF52540">
    <property type="entry name" value="P-loop containing nucleoside triphosphate hydrolases"/>
    <property type="match status" value="1"/>
</dbReference>
<dbReference type="PROSITE" id="PS01128">
    <property type="entry name" value="SHIKIMATE_KINASE"/>
    <property type="match status" value="1"/>
</dbReference>
<comment type="function">
    <text evidence="1">Catalyzes the specific phosphorylation of the 3-hydroxyl group of shikimic acid using ATP as a cosubstrate.</text>
</comment>
<comment type="catalytic activity">
    <reaction evidence="1">
        <text>shikimate + ATP = 3-phosphoshikimate + ADP + H(+)</text>
        <dbReference type="Rhea" id="RHEA:13121"/>
        <dbReference type="ChEBI" id="CHEBI:15378"/>
        <dbReference type="ChEBI" id="CHEBI:30616"/>
        <dbReference type="ChEBI" id="CHEBI:36208"/>
        <dbReference type="ChEBI" id="CHEBI:145989"/>
        <dbReference type="ChEBI" id="CHEBI:456216"/>
        <dbReference type="EC" id="2.7.1.71"/>
    </reaction>
</comment>
<comment type="cofactor">
    <cofactor evidence="1">
        <name>Mg(2+)</name>
        <dbReference type="ChEBI" id="CHEBI:18420"/>
    </cofactor>
    <text evidence="1">Binds 1 Mg(2+) ion per subunit.</text>
</comment>
<comment type="pathway">
    <text evidence="1">Metabolic intermediate biosynthesis; chorismate biosynthesis; chorismate from D-erythrose 4-phosphate and phosphoenolpyruvate: step 5/7.</text>
</comment>
<comment type="subunit">
    <text evidence="1">Monomer.</text>
</comment>
<comment type="subcellular location">
    <subcellularLocation>
        <location evidence="1">Cytoplasm</location>
    </subcellularLocation>
</comment>
<comment type="similarity">
    <text evidence="1">Belongs to the shikimate kinase family.</text>
</comment>
<feature type="chain" id="PRO_1000119051" description="Shikimate kinase">
    <location>
        <begin position="1"/>
        <end position="200"/>
    </location>
</feature>
<feature type="binding site" evidence="1">
    <location>
        <begin position="41"/>
        <end position="46"/>
    </location>
    <ligand>
        <name>ATP</name>
        <dbReference type="ChEBI" id="CHEBI:30616"/>
    </ligand>
</feature>
<feature type="binding site" evidence="1">
    <location>
        <position position="45"/>
    </location>
    <ligand>
        <name>Mg(2+)</name>
        <dbReference type="ChEBI" id="CHEBI:18420"/>
    </ligand>
</feature>
<feature type="binding site" evidence="1">
    <location>
        <position position="63"/>
    </location>
    <ligand>
        <name>substrate</name>
    </ligand>
</feature>
<feature type="binding site" evidence="1">
    <location>
        <position position="87"/>
    </location>
    <ligand>
        <name>substrate</name>
    </ligand>
</feature>
<feature type="binding site" evidence="1">
    <location>
        <position position="109"/>
    </location>
    <ligand>
        <name>substrate</name>
    </ligand>
</feature>
<feature type="binding site" evidence="1">
    <location>
        <position position="147"/>
    </location>
    <ligand>
        <name>ATP</name>
        <dbReference type="ChEBI" id="CHEBI:30616"/>
    </ligand>
</feature>
<feature type="binding site" evidence="1">
    <location>
        <position position="166"/>
    </location>
    <ligand>
        <name>substrate</name>
    </ligand>
</feature>